<reference evidence="2" key="1">
    <citation type="journal article" date="1998" name="Comp. Biochem. Physiol.">
        <title>Novel FMRFamide-like neuropeptides from the eyestalk of the giant freshwater prawn Macrobrachium rosenbergii.</title>
        <authorList>
            <person name="Sithigorngul P."/>
            <person name="Saraithongkum W."/>
            <person name="Jaideechoey S."/>
            <person name="Longyant S."/>
            <person name="Sithigorngul W."/>
        </authorList>
    </citation>
    <scope>PROTEIN SEQUENCE</scope>
    <scope>AMIDATION AT PHE-7</scope>
    <scope>MASS SPECTROMETRY</scope>
    <source>
        <tissue>Eyestalk</tissue>
    </source>
</reference>
<name>FAR1_MACRS</name>
<accession>P83274</accession>
<comment type="subcellular location">
    <subcellularLocation>
        <location>Secreted</location>
    </subcellularLocation>
</comment>
<comment type="mass spectrometry"/>
<comment type="similarity">
    <text evidence="2">Belongs to the FARP (FMRFamide related peptide) family.</text>
</comment>
<protein>
    <recommendedName>
        <fullName>FMRFamide-like neuropeptide FLP1</fullName>
    </recommendedName>
    <alternativeName>
        <fullName>DRNFLRF-amide</fullName>
    </alternativeName>
</protein>
<evidence type="ECO:0000269" key="1">
    <source ref="1"/>
</evidence>
<evidence type="ECO:0000305" key="2"/>
<sequence>DRNFLRF</sequence>
<feature type="peptide" id="PRO_0000043684" description="FMRFamide-like neuropeptide FLP1">
    <location>
        <begin position="1"/>
        <end position="7"/>
    </location>
</feature>
<feature type="modified residue" description="Phenylalanine amide" evidence="1">
    <location>
        <position position="7"/>
    </location>
</feature>
<proteinExistence type="evidence at protein level"/>
<dbReference type="GO" id="GO:0005576">
    <property type="term" value="C:extracellular region"/>
    <property type="evidence" value="ECO:0007669"/>
    <property type="project" value="UniProtKB-SubCell"/>
</dbReference>
<dbReference type="GO" id="GO:0007218">
    <property type="term" value="P:neuropeptide signaling pathway"/>
    <property type="evidence" value="ECO:0000304"/>
    <property type="project" value="UniProtKB"/>
</dbReference>
<organism evidence="2">
    <name type="scientific">Macrobrachium rosenbergii</name>
    <name type="common">Giant fresh water prawn</name>
    <dbReference type="NCBI Taxonomy" id="79674"/>
    <lineage>
        <taxon>Eukaryota</taxon>
        <taxon>Metazoa</taxon>
        <taxon>Ecdysozoa</taxon>
        <taxon>Arthropoda</taxon>
        <taxon>Crustacea</taxon>
        <taxon>Multicrustacea</taxon>
        <taxon>Malacostraca</taxon>
        <taxon>Eumalacostraca</taxon>
        <taxon>Eucarida</taxon>
        <taxon>Decapoda</taxon>
        <taxon>Pleocyemata</taxon>
        <taxon>Caridea</taxon>
        <taxon>Palaemonoidea</taxon>
        <taxon>Palaemonidae</taxon>
        <taxon>Macrobrachium</taxon>
    </lineage>
</organism>
<keyword id="KW-0027">Amidation</keyword>
<keyword id="KW-0903">Direct protein sequencing</keyword>
<keyword id="KW-0527">Neuropeptide</keyword>
<keyword id="KW-0964">Secreted</keyword>